<dbReference type="EMBL" id="CH963925">
    <property type="protein sequence ID" value="EDW78249.1"/>
    <property type="molecule type" value="Genomic_DNA"/>
</dbReference>
<dbReference type="SMR" id="B4N1L0"/>
<dbReference type="STRING" id="7260.B4N1L0"/>
<dbReference type="EnsemblMetazoa" id="FBtr0246977">
    <property type="protein sequence ID" value="FBpp0245469"/>
    <property type="gene ID" value="FBgn0218328"/>
</dbReference>
<dbReference type="EnsemblMetazoa" id="XM_002067227.4">
    <property type="protein sequence ID" value="XP_002067263.1"/>
    <property type="gene ID" value="LOC6644866"/>
</dbReference>
<dbReference type="GeneID" id="6644866"/>
<dbReference type="KEGG" id="dwi:6644866"/>
<dbReference type="CTD" id="31243"/>
<dbReference type="eggNOG" id="KOG0122">
    <property type="taxonomic scope" value="Eukaryota"/>
</dbReference>
<dbReference type="HOGENOM" id="CLU_034595_0_0_1"/>
<dbReference type="OMA" id="ICQGDHF"/>
<dbReference type="OrthoDB" id="639027at2759"/>
<dbReference type="PhylomeDB" id="B4N1L0"/>
<dbReference type="Proteomes" id="UP000007798">
    <property type="component" value="Unassembled WGS sequence"/>
</dbReference>
<dbReference type="GO" id="GO:0016282">
    <property type="term" value="C:eukaryotic 43S preinitiation complex"/>
    <property type="evidence" value="ECO:0007669"/>
    <property type="project" value="UniProtKB-UniRule"/>
</dbReference>
<dbReference type="GO" id="GO:0033290">
    <property type="term" value="C:eukaryotic 48S preinitiation complex"/>
    <property type="evidence" value="ECO:0007669"/>
    <property type="project" value="UniProtKB-UniRule"/>
</dbReference>
<dbReference type="GO" id="GO:0005852">
    <property type="term" value="C:eukaryotic translation initiation factor 3 complex"/>
    <property type="evidence" value="ECO:0007669"/>
    <property type="project" value="UniProtKB-UniRule"/>
</dbReference>
<dbReference type="GO" id="GO:0003723">
    <property type="term" value="F:RNA binding"/>
    <property type="evidence" value="ECO:0007669"/>
    <property type="project" value="UniProtKB-UniRule"/>
</dbReference>
<dbReference type="GO" id="GO:0003743">
    <property type="term" value="F:translation initiation factor activity"/>
    <property type="evidence" value="ECO:0007669"/>
    <property type="project" value="UniProtKB-UniRule"/>
</dbReference>
<dbReference type="GO" id="GO:0001732">
    <property type="term" value="P:formation of cytoplasmic translation initiation complex"/>
    <property type="evidence" value="ECO:0007669"/>
    <property type="project" value="UniProtKB-UniRule"/>
</dbReference>
<dbReference type="CDD" id="cd12933">
    <property type="entry name" value="eIF3G"/>
    <property type="match status" value="1"/>
</dbReference>
<dbReference type="CDD" id="cd12408">
    <property type="entry name" value="RRM_eIF3G_like"/>
    <property type="match status" value="1"/>
</dbReference>
<dbReference type="FunFam" id="3.30.70.330:FF:000828">
    <property type="entry name" value="Eukaryotic translation initiation factor 3 subunit G"/>
    <property type="match status" value="1"/>
</dbReference>
<dbReference type="Gene3D" id="3.30.70.330">
    <property type="match status" value="1"/>
</dbReference>
<dbReference type="HAMAP" id="MF_03006">
    <property type="entry name" value="eIF3g"/>
    <property type="match status" value="1"/>
</dbReference>
<dbReference type="InterPro" id="IPR017334">
    <property type="entry name" value="eIF3_g"/>
</dbReference>
<dbReference type="InterPro" id="IPR024675">
    <property type="entry name" value="eIF3g_N"/>
</dbReference>
<dbReference type="InterPro" id="IPR034240">
    <property type="entry name" value="eIF3G_RRM"/>
</dbReference>
<dbReference type="InterPro" id="IPR012677">
    <property type="entry name" value="Nucleotide-bd_a/b_plait_sf"/>
</dbReference>
<dbReference type="InterPro" id="IPR035979">
    <property type="entry name" value="RBD_domain_sf"/>
</dbReference>
<dbReference type="InterPro" id="IPR000504">
    <property type="entry name" value="RRM_dom"/>
</dbReference>
<dbReference type="PANTHER" id="PTHR10352">
    <property type="entry name" value="EUKARYOTIC TRANSLATION INITIATION FACTOR 3 SUBUNIT G"/>
    <property type="match status" value="1"/>
</dbReference>
<dbReference type="Pfam" id="PF12353">
    <property type="entry name" value="eIF3g"/>
    <property type="match status" value="1"/>
</dbReference>
<dbReference type="Pfam" id="PF00076">
    <property type="entry name" value="RRM_1"/>
    <property type="match status" value="1"/>
</dbReference>
<dbReference type="PIRSF" id="PIRSF037949">
    <property type="entry name" value="Transl_init_eIF-3_RNA-bind"/>
    <property type="match status" value="1"/>
</dbReference>
<dbReference type="SMART" id="SM00360">
    <property type="entry name" value="RRM"/>
    <property type="match status" value="1"/>
</dbReference>
<dbReference type="SUPFAM" id="SSF54928">
    <property type="entry name" value="RNA-binding domain, RBD"/>
    <property type="match status" value="1"/>
</dbReference>
<dbReference type="PROSITE" id="PS50102">
    <property type="entry name" value="RRM"/>
    <property type="match status" value="1"/>
</dbReference>
<proteinExistence type="inferred from homology"/>
<keyword id="KW-0963">Cytoplasm</keyword>
<keyword id="KW-0396">Initiation factor</keyword>
<keyword id="KW-0648">Protein biosynthesis</keyword>
<keyword id="KW-1185">Reference proteome</keyword>
<keyword id="KW-0694">RNA-binding</keyword>
<sequence length="269" mass="29941">MPGVETIKSSWADEVELDYGGLPPTTETVENGHKYVTEYKYNKDDKKTKVVRTYKISKQVVPKTVAKRRTWTKFGESKNDKPGPNSQTTMVSEEIIMQFLNSKEDEKANDPLLDPSKNIAKCRICNGEHWSVNCPYKGTAMDTNLMEKKAAAAASAAVDAPKSGKYVPPFLKDSQKGGMGMRGRDDTAAIRISNLSESMTEADLEELVKKIGPQSKMYLARDKNTGLCKGFAYVHFKQRKDAAAAIEILNGHGYDHLILSVEWSKPQNN</sequence>
<evidence type="ECO:0000250" key="1">
    <source>
        <dbReference type="UniProtKB" id="Q9W4X7"/>
    </source>
</evidence>
<evidence type="ECO:0000255" key="2">
    <source>
        <dbReference type="HAMAP-Rule" id="MF_03006"/>
    </source>
</evidence>
<accession>B4N1L0</accession>
<reference key="1">
    <citation type="journal article" date="2007" name="Nature">
        <title>Evolution of genes and genomes on the Drosophila phylogeny.</title>
        <authorList>
            <consortium name="Drosophila 12 genomes consortium"/>
        </authorList>
    </citation>
    <scope>NUCLEOTIDE SEQUENCE [LARGE SCALE GENOMIC DNA]</scope>
    <source>
        <strain>Tucson 14030-0811.24</strain>
    </source>
</reference>
<name>EI3G1_DROWI</name>
<organism>
    <name type="scientific">Drosophila willistoni</name>
    <name type="common">Fruit fly</name>
    <dbReference type="NCBI Taxonomy" id="7260"/>
    <lineage>
        <taxon>Eukaryota</taxon>
        <taxon>Metazoa</taxon>
        <taxon>Ecdysozoa</taxon>
        <taxon>Arthropoda</taxon>
        <taxon>Hexapoda</taxon>
        <taxon>Insecta</taxon>
        <taxon>Pterygota</taxon>
        <taxon>Neoptera</taxon>
        <taxon>Endopterygota</taxon>
        <taxon>Diptera</taxon>
        <taxon>Brachycera</taxon>
        <taxon>Muscomorpha</taxon>
        <taxon>Ephydroidea</taxon>
        <taxon>Drosophilidae</taxon>
        <taxon>Drosophila</taxon>
        <taxon>Sophophora</taxon>
    </lineage>
</organism>
<gene>
    <name evidence="1" type="primary">eIF3g1</name>
    <name evidence="2" type="synonym">eIF3-S4</name>
    <name evidence="1" type="synonym">eIF3ga</name>
    <name type="ORF">GK16326</name>
</gene>
<feature type="chain" id="PRO_0000365427" description="Eukaryotic translation initiation factor 3 subunit G-1">
    <location>
        <begin position="1"/>
        <end position="269"/>
    </location>
</feature>
<feature type="domain" description="RRM" evidence="2">
    <location>
        <begin position="188"/>
        <end position="266"/>
    </location>
</feature>
<protein>
    <recommendedName>
        <fullName evidence="1">Eukaryotic translation initiation factor 3 subunit G-1</fullName>
    </recommendedName>
    <alternativeName>
        <fullName evidence="2">Eukaryotic translation initiation factor 3 RNA-binding subunit 1</fullName>
        <shortName evidence="2">eIF-3 RNA-binding subunit 1</shortName>
    </alternativeName>
    <alternativeName>
        <fullName evidence="2">Eukaryotic translation initiation factor 3 subunit 4-1</fullName>
    </alternativeName>
</protein>
<comment type="function">
    <text evidence="2">RNA-binding component of the eukaryotic translation initiation factor 3 (eIF-3) complex, which is involved in protein synthesis of a specialized repertoire of mRNAs and, together with other initiation factors, stimulates binding of mRNA and methionyl-tRNAi to the 40S ribosome. The eIF-3 complex specifically targets and initiates translation of a subset of mRNAs involved in cell proliferation. This subunit can bind 18S rRNA.</text>
</comment>
<comment type="subunit">
    <text evidence="2">Component of the eukaryotic translation initiation factor 3 (eIF-3) complex. The eIF-3 complex interacts with pix.</text>
</comment>
<comment type="subcellular location">
    <subcellularLocation>
        <location evidence="2">Cytoplasm</location>
    </subcellularLocation>
</comment>
<comment type="similarity">
    <text evidence="2">Belongs to the eIF-3 subunit G family.</text>
</comment>